<comment type="function">
    <text evidence="1">Acts as a chaperone.</text>
</comment>
<comment type="induction">
    <text evidence="1">By stress conditions e.g. heat shock.</text>
</comment>
<comment type="similarity">
    <text evidence="1">Belongs to the heat shock protein 70 family.</text>
</comment>
<dbReference type="EMBL" id="AM039952">
    <property type="protein sequence ID" value="CAJ23196.1"/>
    <property type="molecule type" value="Genomic_DNA"/>
</dbReference>
<dbReference type="RefSeq" id="WP_011346955.1">
    <property type="nucleotide sequence ID" value="NZ_CP017190.1"/>
</dbReference>
<dbReference type="SMR" id="Q3BVB8"/>
<dbReference type="STRING" id="456327.BJD11_14810"/>
<dbReference type="GeneID" id="97509898"/>
<dbReference type="KEGG" id="xcv:XCV1564"/>
<dbReference type="eggNOG" id="COG0443">
    <property type="taxonomic scope" value="Bacteria"/>
</dbReference>
<dbReference type="HOGENOM" id="CLU_005965_2_1_6"/>
<dbReference type="Proteomes" id="UP000007069">
    <property type="component" value="Chromosome"/>
</dbReference>
<dbReference type="GO" id="GO:0005524">
    <property type="term" value="F:ATP binding"/>
    <property type="evidence" value="ECO:0007669"/>
    <property type="project" value="UniProtKB-UniRule"/>
</dbReference>
<dbReference type="GO" id="GO:0140662">
    <property type="term" value="F:ATP-dependent protein folding chaperone"/>
    <property type="evidence" value="ECO:0007669"/>
    <property type="project" value="InterPro"/>
</dbReference>
<dbReference type="GO" id="GO:0051082">
    <property type="term" value="F:unfolded protein binding"/>
    <property type="evidence" value="ECO:0007669"/>
    <property type="project" value="InterPro"/>
</dbReference>
<dbReference type="CDD" id="cd10234">
    <property type="entry name" value="ASKHA_NBD_HSP70_DnaK-like"/>
    <property type="match status" value="1"/>
</dbReference>
<dbReference type="FunFam" id="2.60.34.10:FF:000014">
    <property type="entry name" value="Chaperone protein DnaK HSP70"/>
    <property type="match status" value="1"/>
</dbReference>
<dbReference type="FunFam" id="1.20.1270.10:FF:000001">
    <property type="entry name" value="Molecular chaperone DnaK"/>
    <property type="match status" value="1"/>
</dbReference>
<dbReference type="FunFam" id="3.30.420.40:FF:000004">
    <property type="entry name" value="Molecular chaperone DnaK"/>
    <property type="match status" value="1"/>
</dbReference>
<dbReference type="FunFam" id="3.90.640.10:FF:000003">
    <property type="entry name" value="Molecular chaperone DnaK"/>
    <property type="match status" value="1"/>
</dbReference>
<dbReference type="Gene3D" id="1.20.1270.10">
    <property type="match status" value="1"/>
</dbReference>
<dbReference type="Gene3D" id="3.30.420.40">
    <property type="match status" value="2"/>
</dbReference>
<dbReference type="Gene3D" id="3.90.640.10">
    <property type="entry name" value="Actin, Chain A, domain 4"/>
    <property type="match status" value="1"/>
</dbReference>
<dbReference type="Gene3D" id="2.60.34.10">
    <property type="entry name" value="Substrate Binding Domain Of DNAk, Chain A, domain 1"/>
    <property type="match status" value="1"/>
</dbReference>
<dbReference type="HAMAP" id="MF_00332">
    <property type="entry name" value="DnaK"/>
    <property type="match status" value="1"/>
</dbReference>
<dbReference type="InterPro" id="IPR043129">
    <property type="entry name" value="ATPase_NBD"/>
</dbReference>
<dbReference type="InterPro" id="IPR012725">
    <property type="entry name" value="Chaperone_DnaK"/>
</dbReference>
<dbReference type="InterPro" id="IPR018181">
    <property type="entry name" value="Heat_shock_70_CS"/>
</dbReference>
<dbReference type="InterPro" id="IPR029048">
    <property type="entry name" value="HSP70_C_sf"/>
</dbReference>
<dbReference type="InterPro" id="IPR029047">
    <property type="entry name" value="HSP70_peptide-bd_sf"/>
</dbReference>
<dbReference type="InterPro" id="IPR013126">
    <property type="entry name" value="Hsp_70_fam"/>
</dbReference>
<dbReference type="NCBIfam" id="NF001413">
    <property type="entry name" value="PRK00290.1"/>
    <property type="match status" value="1"/>
</dbReference>
<dbReference type="NCBIfam" id="NF003520">
    <property type="entry name" value="PRK05183.1"/>
    <property type="match status" value="1"/>
</dbReference>
<dbReference type="NCBIfam" id="TIGR02350">
    <property type="entry name" value="prok_dnaK"/>
    <property type="match status" value="1"/>
</dbReference>
<dbReference type="PANTHER" id="PTHR19375">
    <property type="entry name" value="HEAT SHOCK PROTEIN 70KDA"/>
    <property type="match status" value="1"/>
</dbReference>
<dbReference type="Pfam" id="PF00012">
    <property type="entry name" value="HSP70"/>
    <property type="match status" value="1"/>
</dbReference>
<dbReference type="PRINTS" id="PR00301">
    <property type="entry name" value="HEATSHOCK70"/>
</dbReference>
<dbReference type="SUPFAM" id="SSF53067">
    <property type="entry name" value="Actin-like ATPase domain"/>
    <property type="match status" value="2"/>
</dbReference>
<dbReference type="SUPFAM" id="SSF100920">
    <property type="entry name" value="Heat shock protein 70kD (HSP70), peptide-binding domain"/>
    <property type="match status" value="1"/>
</dbReference>
<dbReference type="PROSITE" id="PS00297">
    <property type="entry name" value="HSP70_1"/>
    <property type="match status" value="1"/>
</dbReference>
<dbReference type="PROSITE" id="PS00329">
    <property type="entry name" value="HSP70_2"/>
    <property type="match status" value="1"/>
</dbReference>
<dbReference type="PROSITE" id="PS01036">
    <property type="entry name" value="HSP70_3"/>
    <property type="match status" value="1"/>
</dbReference>
<sequence>MGKIIGIDLGTTNSCVSIMDGGKARVIENSEGDRTTPSIVAYTKDGEVLVGASAKRQAVTNPKNTFYAVKRLIGRKFTDGEVQKDISHVPYGILAHDNGDAWVQTSDAKRMAPQEISARVLEKMKKTAEDFLGEKVTEAVITVPAYFNDSQRQATKDAGRIAGLDVKRIINEPTAAALAYGLDKNGGDRKIAVYDLGGGTFDVSIIEIAEVDGEKQFEVLATNGDTFLGGEDFDNRVIEYLVDEFNKDQGIDLRKDPLALQRLKDAAERAKIELSSSQQTEVNLPYVTADASGPKHLNIKLTRAKLEALVEDLVKKSIEPCRTALNDAGLRASDINEVILVGGQTRMPKVQQAVADFFGKEPRKDVNPDEAVAVGAAIQGGVLAGDVKDVLLLDVTPLSLGIETMGGVFTKIIEKNTTIPTKASQTFSTAEDNQSAVTVHVLQGEREQARFNKSLAKFDLSGIEPAPRGMPQVEVSFDIDANGILHVSAKDKKTNKEQKVEIKAGSGLSDEEIQRMVADAEANREEDKKFQELVQARNQADGLIHATRTAITEHGSKVGGDVIGKVEAALSDLETAMKGDDKAQIEARTKTLEEAGQSLYAAAAAAEQGGNADAASGNAQASKAADDVVDAEFTEVKDDKK</sequence>
<protein>
    <recommendedName>
        <fullName evidence="1">Chaperone protein DnaK</fullName>
    </recommendedName>
    <alternativeName>
        <fullName evidence="1">HSP70</fullName>
    </alternativeName>
    <alternativeName>
        <fullName evidence="1">Heat shock 70 kDa protein</fullName>
    </alternativeName>
    <alternativeName>
        <fullName evidence="1">Heat shock protein 70</fullName>
    </alternativeName>
</protein>
<proteinExistence type="inferred from homology"/>
<reference key="1">
    <citation type="journal article" date="2005" name="J. Bacteriol.">
        <title>Insights into genome plasticity and pathogenicity of the plant pathogenic Bacterium Xanthomonas campestris pv. vesicatoria revealed by the complete genome sequence.</title>
        <authorList>
            <person name="Thieme F."/>
            <person name="Koebnik R."/>
            <person name="Bekel T."/>
            <person name="Berger C."/>
            <person name="Boch J."/>
            <person name="Buettner D."/>
            <person name="Caldana C."/>
            <person name="Gaigalat L."/>
            <person name="Goesmann A."/>
            <person name="Kay S."/>
            <person name="Kirchner O."/>
            <person name="Lanz C."/>
            <person name="Linke B."/>
            <person name="McHardy A.C."/>
            <person name="Meyer F."/>
            <person name="Mittenhuber G."/>
            <person name="Nies D.H."/>
            <person name="Niesbach-Kloesgen U."/>
            <person name="Patschkowski T."/>
            <person name="Rueckert C."/>
            <person name="Rupp O."/>
            <person name="Schneiker S."/>
            <person name="Schuster S.C."/>
            <person name="Vorhoelter F.J."/>
            <person name="Weber E."/>
            <person name="Puehler A."/>
            <person name="Bonas U."/>
            <person name="Bartels D."/>
            <person name="Kaiser O."/>
        </authorList>
    </citation>
    <scope>NUCLEOTIDE SEQUENCE [LARGE SCALE GENOMIC DNA]</scope>
    <source>
        <strain>85-10</strain>
    </source>
</reference>
<gene>
    <name evidence="1" type="primary">dnaK</name>
    <name type="ordered locus">XCV1564</name>
</gene>
<evidence type="ECO:0000255" key="1">
    <source>
        <dbReference type="HAMAP-Rule" id="MF_00332"/>
    </source>
</evidence>
<evidence type="ECO:0000256" key="2">
    <source>
        <dbReference type="SAM" id="MobiDB-lite"/>
    </source>
</evidence>
<feature type="chain" id="PRO_0000226031" description="Chaperone protein DnaK">
    <location>
        <begin position="1"/>
        <end position="641"/>
    </location>
</feature>
<feature type="region of interest" description="Disordered" evidence="2">
    <location>
        <begin position="606"/>
        <end position="627"/>
    </location>
</feature>
<feature type="compositionally biased region" description="Low complexity" evidence="2">
    <location>
        <begin position="606"/>
        <end position="623"/>
    </location>
</feature>
<feature type="modified residue" description="Phosphothreonine; by autocatalysis" evidence="1">
    <location>
        <position position="200"/>
    </location>
</feature>
<keyword id="KW-0067">ATP-binding</keyword>
<keyword id="KW-0143">Chaperone</keyword>
<keyword id="KW-0547">Nucleotide-binding</keyword>
<keyword id="KW-0597">Phosphoprotein</keyword>
<keyword id="KW-0346">Stress response</keyword>
<name>DNAK_XANE5</name>
<organism>
    <name type="scientific">Xanthomonas euvesicatoria pv. vesicatoria (strain 85-10)</name>
    <name type="common">Xanthomonas campestris pv. vesicatoria</name>
    <dbReference type="NCBI Taxonomy" id="316273"/>
    <lineage>
        <taxon>Bacteria</taxon>
        <taxon>Pseudomonadati</taxon>
        <taxon>Pseudomonadota</taxon>
        <taxon>Gammaproteobacteria</taxon>
        <taxon>Lysobacterales</taxon>
        <taxon>Lysobacteraceae</taxon>
        <taxon>Xanthomonas</taxon>
    </lineage>
</organism>
<accession>Q3BVB8</accession>